<proteinExistence type="inferred from homology"/>
<dbReference type="EC" id="2.7.7.7" evidence="1"/>
<dbReference type="EMBL" id="CP000087">
    <property type="protein sequence ID" value="ABE05288.1"/>
    <property type="molecule type" value="Genomic_DNA"/>
</dbReference>
<dbReference type="RefSeq" id="WP_011477866.1">
    <property type="nucleotide sequence ID" value="NC_007940.1"/>
</dbReference>
<dbReference type="SMR" id="Q1RH76"/>
<dbReference type="KEGG" id="rbe:RBE_1207"/>
<dbReference type="eggNOG" id="COG0258">
    <property type="taxonomic scope" value="Bacteria"/>
</dbReference>
<dbReference type="eggNOG" id="COG0749">
    <property type="taxonomic scope" value="Bacteria"/>
</dbReference>
<dbReference type="HOGENOM" id="CLU_004675_0_0_5"/>
<dbReference type="OrthoDB" id="9806424at2"/>
<dbReference type="Proteomes" id="UP000001951">
    <property type="component" value="Chromosome"/>
</dbReference>
<dbReference type="GO" id="GO:0008409">
    <property type="term" value="F:5'-3' exonuclease activity"/>
    <property type="evidence" value="ECO:0007669"/>
    <property type="project" value="InterPro"/>
</dbReference>
<dbReference type="GO" id="GO:0003677">
    <property type="term" value="F:DNA binding"/>
    <property type="evidence" value="ECO:0007669"/>
    <property type="project" value="UniProtKB-KW"/>
</dbReference>
<dbReference type="GO" id="GO:0003887">
    <property type="term" value="F:DNA-directed DNA polymerase activity"/>
    <property type="evidence" value="ECO:0007669"/>
    <property type="project" value="UniProtKB-KW"/>
</dbReference>
<dbReference type="GO" id="GO:0006261">
    <property type="term" value="P:DNA-templated DNA replication"/>
    <property type="evidence" value="ECO:0007669"/>
    <property type="project" value="InterPro"/>
</dbReference>
<dbReference type="GO" id="GO:0006302">
    <property type="term" value="P:double-strand break repair"/>
    <property type="evidence" value="ECO:0007669"/>
    <property type="project" value="TreeGrafter"/>
</dbReference>
<dbReference type="CDD" id="cd08637">
    <property type="entry name" value="DNA_pol_A_pol_I_C"/>
    <property type="match status" value="1"/>
</dbReference>
<dbReference type="CDD" id="cd09898">
    <property type="entry name" value="H3TH_53EXO"/>
    <property type="match status" value="1"/>
</dbReference>
<dbReference type="CDD" id="cd09859">
    <property type="entry name" value="PIN_53EXO"/>
    <property type="match status" value="1"/>
</dbReference>
<dbReference type="FunFam" id="1.10.150.20:FF:000002">
    <property type="entry name" value="DNA polymerase I"/>
    <property type="match status" value="1"/>
</dbReference>
<dbReference type="FunFam" id="1.10.150.20:FF:000003">
    <property type="entry name" value="DNA polymerase I"/>
    <property type="match status" value="1"/>
</dbReference>
<dbReference type="FunFam" id="1.20.1060.10:FF:000001">
    <property type="entry name" value="DNA polymerase I"/>
    <property type="match status" value="1"/>
</dbReference>
<dbReference type="FunFam" id="3.40.50.1010:FF:000001">
    <property type="entry name" value="DNA polymerase I"/>
    <property type="match status" value="1"/>
</dbReference>
<dbReference type="Gene3D" id="3.30.70.370">
    <property type="match status" value="1"/>
</dbReference>
<dbReference type="Gene3D" id="1.10.150.20">
    <property type="entry name" value="5' to 3' exonuclease, C-terminal subdomain"/>
    <property type="match status" value="2"/>
</dbReference>
<dbReference type="Gene3D" id="3.40.50.1010">
    <property type="entry name" value="5'-nuclease"/>
    <property type="match status" value="1"/>
</dbReference>
<dbReference type="Gene3D" id="3.30.420.10">
    <property type="entry name" value="Ribonuclease H-like superfamily/Ribonuclease H"/>
    <property type="match status" value="1"/>
</dbReference>
<dbReference type="Gene3D" id="1.20.1060.10">
    <property type="entry name" value="Taq DNA Polymerase, Chain T, domain 4"/>
    <property type="match status" value="1"/>
</dbReference>
<dbReference type="InterPro" id="IPR020046">
    <property type="entry name" value="5-3_exonucl_a-hlix_arch_N"/>
</dbReference>
<dbReference type="InterPro" id="IPR002421">
    <property type="entry name" value="5-3_exonuclease"/>
</dbReference>
<dbReference type="InterPro" id="IPR036279">
    <property type="entry name" value="5-3_exonuclease_C_sf"/>
</dbReference>
<dbReference type="InterPro" id="IPR019760">
    <property type="entry name" value="DNA-dir_DNA_pol_A_CS"/>
</dbReference>
<dbReference type="InterPro" id="IPR001098">
    <property type="entry name" value="DNA-dir_DNA_pol_A_palm_dom"/>
</dbReference>
<dbReference type="InterPro" id="IPR043502">
    <property type="entry name" value="DNA/RNA_pol_sf"/>
</dbReference>
<dbReference type="InterPro" id="IPR020045">
    <property type="entry name" value="DNA_polI_H3TH"/>
</dbReference>
<dbReference type="InterPro" id="IPR018320">
    <property type="entry name" value="DNA_polymerase_1"/>
</dbReference>
<dbReference type="InterPro" id="IPR002298">
    <property type="entry name" value="DNA_polymerase_A"/>
</dbReference>
<dbReference type="InterPro" id="IPR008918">
    <property type="entry name" value="HhH2"/>
</dbReference>
<dbReference type="InterPro" id="IPR029060">
    <property type="entry name" value="PIN-like_dom_sf"/>
</dbReference>
<dbReference type="InterPro" id="IPR036397">
    <property type="entry name" value="RNaseH_sf"/>
</dbReference>
<dbReference type="NCBIfam" id="TIGR00593">
    <property type="entry name" value="pola"/>
    <property type="match status" value="1"/>
</dbReference>
<dbReference type="NCBIfam" id="NF004397">
    <property type="entry name" value="PRK05755.1"/>
    <property type="match status" value="1"/>
</dbReference>
<dbReference type="PANTHER" id="PTHR10133">
    <property type="entry name" value="DNA POLYMERASE I"/>
    <property type="match status" value="1"/>
</dbReference>
<dbReference type="PANTHER" id="PTHR10133:SF27">
    <property type="entry name" value="DNA POLYMERASE NU"/>
    <property type="match status" value="1"/>
</dbReference>
<dbReference type="Pfam" id="PF01367">
    <property type="entry name" value="5_3_exonuc"/>
    <property type="match status" value="1"/>
</dbReference>
<dbReference type="Pfam" id="PF02739">
    <property type="entry name" value="5_3_exonuc_N"/>
    <property type="match status" value="1"/>
</dbReference>
<dbReference type="Pfam" id="PF00476">
    <property type="entry name" value="DNA_pol_A"/>
    <property type="match status" value="1"/>
</dbReference>
<dbReference type="PRINTS" id="PR00868">
    <property type="entry name" value="DNAPOLI"/>
</dbReference>
<dbReference type="SMART" id="SM00475">
    <property type="entry name" value="53EXOc"/>
    <property type="match status" value="1"/>
</dbReference>
<dbReference type="SMART" id="SM00279">
    <property type="entry name" value="HhH2"/>
    <property type="match status" value="1"/>
</dbReference>
<dbReference type="SMART" id="SM00482">
    <property type="entry name" value="POLAc"/>
    <property type="match status" value="1"/>
</dbReference>
<dbReference type="SUPFAM" id="SSF47807">
    <property type="entry name" value="5' to 3' exonuclease, C-terminal subdomain"/>
    <property type="match status" value="1"/>
</dbReference>
<dbReference type="SUPFAM" id="SSF56672">
    <property type="entry name" value="DNA/RNA polymerases"/>
    <property type="match status" value="1"/>
</dbReference>
<dbReference type="SUPFAM" id="SSF88723">
    <property type="entry name" value="PIN domain-like"/>
    <property type="match status" value="1"/>
</dbReference>
<dbReference type="PROSITE" id="PS00447">
    <property type="entry name" value="DNA_POLYMERASE_A"/>
    <property type="match status" value="1"/>
</dbReference>
<name>DPO1_RICBR</name>
<feature type="chain" id="PRO_0000280949" description="DNA polymerase I">
    <location>
        <begin position="1"/>
        <end position="871"/>
    </location>
</feature>
<feature type="domain" description="5'-3' exonuclease">
    <location>
        <begin position="1"/>
        <end position="283"/>
    </location>
</feature>
<organism>
    <name type="scientific">Rickettsia bellii (strain RML369-C)</name>
    <dbReference type="NCBI Taxonomy" id="336407"/>
    <lineage>
        <taxon>Bacteria</taxon>
        <taxon>Pseudomonadati</taxon>
        <taxon>Pseudomonadota</taxon>
        <taxon>Alphaproteobacteria</taxon>
        <taxon>Rickettsiales</taxon>
        <taxon>Rickettsiaceae</taxon>
        <taxon>Rickettsieae</taxon>
        <taxon>Rickettsia</taxon>
        <taxon>belli group</taxon>
    </lineage>
</organism>
<gene>
    <name type="primary">polA</name>
    <name type="ordered locus">RBE_1207</name>
</gene>
<evidence type="ECO:0000250" key="1">
    <source>
        <dbReference type="UniProtKB" id="P52026"/>
    </source>
</evidence>
<evidence type="ECO:0000305" key="2"/>
<reference key="1">
    <citation type="journal article" date="2006" name="PLoS Genet.">
        <title>Genome sequence of Rickettsia bellii illuminates the role of amoebae in gene exchanges between intracellular pathogens.</title>
        <authorList>
            <person name="Ogata H."/>
            <person name="La Scola B."/>
            <person name="Audic S."/>
            <person name="Renesto P."/>
            <person name="Blanc G."/>
            <person name="Robert C."/>
            <person name="Fournier P.-E."/>
            <person name="Claverie J.-M."/>
            <person name="Raoult D."/>
        </authorList>
    </citation>
    <scope>NUCLEOTIDE SEQUENCE [LARGE SCALE GENOMIC DNA]</scope>
    <source>
        <strain>RML369-C</strain>
    </source>
</reference>
<comment type="function">
    <text evidence="1">In addition to polymerase activity, this DNA polymerase exhibits 5'-3' exonuclease activity.</text>
</comment>
<comment type="catalytic activity">
    <reaction evidence="1">
        <text>DNA(n) + a 2'-deoxyribonucleoside 5'-triphosphate = DNA(n+1) + diphosphate</text>
        <dbReference type="Rhea" id="RHEA:22508"/>
        <dbReference type="Rhea" id="RHEA-COMP:17339"/>
        <dbReference type="Rhea" id="RHEA-COMP:17340"/>
        <dbReference type="ChEBI" id="CHEBI:33019"/>
        <dbReference type="ChEBI" id="CHEBI:61560"/>
        <dbReference type="ChEBI" id="CHEBI:173112"/>
        <dbReference type="EC" id="2.7.7.7"/>
    </reaction>
</comment>
<comment type="subunit">
    <text evidence="1">Single-chain monomer with multiple functions.</text>
</comment>
<comment type="similarity">
    <text evidence="2">Belongs to the DNA polymerase type-A family.</text>
</comment>
<sequence length="871" mass="98632">MTKKNTLLLIDGYGFVFRAYYAQQPLTSPKGEPVGALYGFTSMLLKLLNDFKPKHAAVVFDSGGKNFRHEIYPEYKANRPPPPEDLIAQLPLVRDVARNLNFPILEKNGFEADDIIATFAAKTASIGEEVVVISSDKDLLQLMNDNVKIYDPLKAKYITEDNVVEKFGVTSDKLREVMALIGDKSDNIPGVPSIGPKTASSLITQFGTVENIFNSLEQVSSIKQRETLQNSKEAALISWQLIGLDYNVDMDFKLDALEWSPPDHNKLTEFLHEYGFKSLYKRAENLFDIKISEHKEVIEEKAVEIKDISNKAELEAFAEKAKKVGIFGIYILQNKGANIAFILSLKNQAYIIKISNEANNLFTYNSKADNEWFTDIIFNLLTDQSIKKITYSLKPLLKFYASRAQQITAIEDLELMNYALSAGLPQKNLFEAVEKEATIEEAAKIVVGFIDLYQQTILELKDNKAFRIYKEIDLPVCFVIDKMEKAGIKVDANYLNQLSSEFGAEILKLEEEIFVLSGMKFNIGSPKQLGEILFEKMQLPFGKTSAKANSYSTGADILEKLSEQGYPIADLLLRWRQLTKLKNTYTDSLPKQIDNITRRIHTTFLQTSTTTGRLSSQEPNLQNVPIRSGEGNKIRQAFVAEQGYKLISADYSQIELRILSHIADIKALKQAFINKDDIHTQTACQIFNLQKEELTSEHRRKAKAINFGIIYGISAFGLAKQLNVSNTEAAEYIKKYFAEYKGVQEYMEATKSFAQANGYVTDFFGRKCFVPLINDKRLKQFAERAAINAPIQGTNADIIKIAMTLLDREIEKRKLKTRLVLQIHDELLFEAPIDEIETIMPIIKQIMENSTNMDVPIITEIRAGNNWMEIH</sequence>
<accession>Q1RH76</accession>
<keyword id="KW-0227">DNA damage</keyword>
<keyword id="KW-0234">DNA repair</keyword>
<keyword id="KW-0235">DNA replication</keyword>
<keyword id="KW-0238">DNA-binding</keyword>
<keyword id="KW-0239">DNA-directed DNA polymerase</keyword>
<keyword id="KW-0269">Exonuclease</keyword>
<keyword id="KW-0378">Hydrolase</keyword>
<keyword id="KW-0540">Nuclease</keyword>
<keyword id="KW-0548">Nucleotidyltransferase</keyword>
<keyword id="KW-0808">Transferase</keyword>
<protein>
    <recommendedName>
        <fullName>DNA polymerase I</fullName>
        <shortName>POL I</shortName>
        <ecNumber evidence="1">2.7.7.7</ecNumber>
    </recommendedName>
</protein>